<name>ACEA_GIBZE</name>
<evidence type="ECO:0000250" key="1">
    <source>
        <dbReference type="UniProtKB" id="P28240"/>
    </source>
</evidence>
<evidence type="ECO:0000250" key="2">
    <source>
        <dbReference type="UniProtKB" id="P28299"/>
    </source>
</evidence>
<evidence type="ECO:0000250" key="3">
    <source>
        <dbReference type="UniProtKB" id="P9WKK7"/>
    </source>
</evidence>
<evidence type="ECO:0000305" key="4"/>
<evidence type="ECO:0007829" key="5">
    <source>
        <dbReference type="PDB" id="5E9H"/>
    </source>
</evidence>
<accession>Q4HYR2</accession>
<accession>A0A0E0RVC2</accession>
<accession>V6RX12</accession>
<gene>
    <name evidence="1" type="primary">ICL1</name>
    <name type="ORF">FGRRES_09896</name>
    <name type="ORF">FGSG_09896</name>
</gene>
<proteinExistence type="evidence at protein level"/>
<organism>
    <name type="scientific">Gibberella zeae (strain ATCC MYA-4620 / CBS 123657 / FGSC 9075 / NRRL 31084 / PH-1)</name>
    <name type="common">Wheat head blight fungus</name>
    <name type="synonym">Fusarium graminearum</name>
    <dbReference type="NCBI Taxonomy" id="229533"/>
    <lineage>
        <taxon>Eukaryota</taxon>
        <taxon>Fungi</taxon>
        <taxon>Dikarya</taxon>
        <taxon>Ascomycota</taxon>
        <taxon>Pezizomycotina</taxon>
        <taxon>Sordariomycetes</taxon>
        <taxon>Hypocreomycetidae</taxon>
        <taxon>Hypocreales</taxon>
        <taxon>Nectriaceae</taxon>
        <taxon>Fusarium</taxon>
    </lineage>
</organism>
<sequence length="546" mass="60826">MASQNMTNPSINPDIEDELFQKEVEAVKTWWSDSRWRQTKRPFTAEQIVSKRGYLPIDYASNTQAKKLWKILEHRFENRDASYTYGCLEPTMVTQMAKYLDTVYVSGWQSSSTASASDEPGPDLADYPYTTVPNKVGHLFMAQLFHDRKQRQERLSVPKEQRANLLNIDYLRPIVADADTGHGGLTAVMKLTKLFIEKGAAGIHIEDQAPGTKKCGHMAGKVLVPIQEHINRLVAIRAQADIMGSDLLAIARTDAEAATLLSTNIDPRDHAFILGSTNSTLKPLNDLMIAAEATGKSGAELQRIEDEWLAKANLSSFDDAVAAAIDAGSFSDKAGIKQEYTSRAKGKSNFEARAVARQLLGRDIFFDWDAPRTREGYFRLKGGCDCAVNRAIAYAPYCDAIWMESKLPDFAQAEQFAQGVHAVWPEKKLAYNLSPSFNWKTAMPRDEQETYIRRLAKLGYCWQFITLAGLHTTALISDQFAKAYSTVGMRAYGELVQEPEMDQKVDVVKHQKWSGATYVDELQKMVTGGISSTAAMGAGVTEDQFK</sequence>
<keyword id="KW-0002">3D-structure</keyword>
<keyword id="KW-0329">Glyoxylate bypass</keyword>
<keyword id="KW-0330">Glyoxysome</keyword>
<keyword id="KW-0456">Lyase</keyword>
<keyword id="KW-0460">Magnesium</keyword>
<keyword id="KW-0479">Metal-binding</keyword>
<keyword id="KW-0576">Peroxisome</keyword>
<keyword id="KW-1185">Reference proteome</keyword>
<keyword id="KW-0816">Tricarboxylic acid cycle</keyword>
<reference key="1">
    <citation type="journal article" date="2007" name="Science">
        <title>The Fusarium graminearum genome reveals a link between localized polymorphism and pathogen specialization.</title>
        <authorList>
            <person name="Cuomo C.A."/>
            <person name="Gueldener U."/>
            <person name="Xu J.-R."/>
            <person name="Trail F."/>
            <person name="Turgeon B.G."/>
            <person name="Di Pietro A."/>
            <person name="Walton J.D."/>
            <person name="Ma L.-J."/>
            <person name="Baker S.E."/>
            <person name="Rep M."/>
            <person name="Adam G."/>
            <person name="Antoniw J."/>
            <person name="Baldwin T."/>
            <person name="Calvo S.E."/>
            <person name="Chang Y.-L."/>
            <person name="DeCaprio D."/>
            <person name="Gale L.R."/>
            <person name="Gnerre S."/>
            <person name="Goswami R.S."/>
            <person name="Hammond-Kosack K."/>
            <person name="Harris L.J."/>
            <person name="Hilburn K."/>
            <person name="Kennell J.C."/>
            <person name="Kroken S."/>
            <person name="Magnuson J.K."/>
            <person name="Mannhaupt G."/>
            <person name="Mauceli E.W."/>
            <person name="Mewes H.-W."/>
            <person name="Mitterbauer R."/>
            <person name="Muehlbauer G."/>
            <person name="Muensterkoetter M."/>
            <person name="Nelson D."/>
            <person name="O'Donnell K."/>
            <person name="Ouellet T."/>
            <person name="Qi W."/>
            <person name="Quesneville H."/>
            <person name="Roncero M.I.G."/>
            <person name="Seong K.-Y."/>
            <person name="Tetko I.V."/>
            <person name="Urban M."/>
            <person name="Waalwijk C."/>
            <person name="Ward T.J."/>
            <person name="Yao J."/>
            <person name="Birren B.W."/>
            <person name="Kistler H.C."/>
        </authorList>
    </citation>
    <scope>NUCLEOTIDE SEQUENCE [LARGE SCALE GENOMIC DNA]</scope>
    <source>
        <strain>ATCC MYA-4620 / CBS 123657 / FGSC 9075 / NRRL 31084 / PH-1</strain>
    </source>
</reference>
<reference key="2">
    <citation type="journal article" date="2010" name="Nature">
        <title>Comparative genomics reveals mobile pathogenicity chromosomes in Fusarium.</title>
        <authorList>
            <person name="Ma L.-J."/>
            <person name="van der Does H.C."/>
            <person name="Borkovich K.A."/>
            <person name="Coleman J.J."/>
            <person name="Daboussi M.-J."/>
            <person name="Di Pietro A."/>
            <person name="Dufresne M."/>
            <person name="Freitag M."/>
            <person name="Grabherr M."/>
            <person name="Henrissat B."/>
            <person name="Houterman P.M."/>
            <person name="Kang S."/>
            <person name="Shim W.-B."/>
            <person name="Woloshuk C."/>
            <person name="Xie X."/>
            <person name="Xu J.-R."/>
            <person name="Antoniw J."/>
            <person name="Baker S.E."/>
            <person name="Bluhm B.H."/>
            <person name="Breakspear A."/>
            <person name="Brown D.W."/>
            <person name="Butchko R.A.E."/>
            <person name="Chapman S."/>
            <person name="Coulson R."/>
            <person name="Coutinho P.M."/>
            <person name="Danchin E.G.J."/>
            <person name="Diener A."/>
            <person name="Gale L.R."/>
            <person name="Gardiner D.M."/>
            <person name="Goff S."/>
            <person name="Hammond-Kosack K.E."/>
            <person name="Hilburn K."/>
            <person name="Hua-Van A."/>
            <person name="Jonkers W."/>
            <person name="Kazan K."/>
            <person name="Kodira C.D."/>
            <person name="Koehrsen M."/>
            <person name="Kumar L."/>
            <person name="Lee Y.-H."/>
            <person name="Li L."/>
            <person name="Manners J.M."/>
            <person name="Miranda-Saavedra D."/>
            <person name="Mukherjee M."/>
            <person name="Park G."/>
            <person name="Park J."/>
            <person name="Park S.-Y."/>
            <person name="Proctor R.H."/>
            <person name="Regev A."/>
            <person name="Ruiz-Roldan M.C."/>
            <person name="Sain D."/>
            <person name="Sakthikumar S."/>
            <person name="Sykes S."/>
            <person name="Schwartz D.C."/>
            <person name="Turgeon B.G."/>
            <person name="Wapinski I."/>
            <person name="Yoder O."/>
            <person name="Young S."/>
            <person name="Zeng Q."/>
            <person name="Zhou S."/>
            <person name="Galagan J."/>
            <person name="Cuomo C.A."/>
            <person name="Kistler H.C."/>
            <person name="Rep M."/>
        </authorList>
    </citation>
    <scope>GENOME REANNOTATION</scope>
    <source>
        <strain>ATCC MYA-4620 / CBS 123657 / FGSC 9075 / NRRL 31084 / PH-1</strain>
    </source>
</reference>
<reference key="3">
    <citation type="journal article" date="2015" name="BMC Genomics">
        <title>The completed genome sequence of the pathogenic ascomycete fungus Fusarium graminearum.</title>
        <authorList>
            <person name="King R."/>
            <person name="Urban M."/>
            <person name="Hammond-Kosack M.C.U."/>
            <person name="Hassani-Pak K."/>
            <person name="Hammond-Kosack K.E."/>
        </authorList>
    </citation>
    <scope>NUCLEOTIDE SEQUENCE [LARGE SCALE GENOMIC DNA]</scope>
    <source>
        <strain>ATCC MYA-4620 / CBS 123657 / FGSC 9075 / NRRL 31084 / PH-1</strain>
    </source>
</reference>
<protein>
    <recommendedName>
        <fullName evidence="1">Isocitrate lyase</fullName>
        <shortName evidence="4">ICL</shortName>
        <shortName evidence="4">Isocitrase</shortName>
        <shortName evidence="4">Isocitratase</shortName>
        <ecNumber evidence="1">4.1.3.1</ecNumber>
    </recommendedName>
    <alternativeName>
        <fullName evidence="1">Methylisocitrate lyase</fullName>
        <shortName evidence="4">MICA</shortName>
        <ecNumber evidence="1">4.1.3.30</ecNumber>
    </alternativeName>
    <alternativeName>
        <fullName evidence="4">Threo-D(S)-isocitrate glyoxylate-lyase</fullName>
    </alternativeName>
</protein>
<comment type="function">
    <text evidence="1">Catalyzes the formation of succinate and glyoxylate from isocitrate, a key step of the glyoxylate cycle, which operates as an anaplerotic route for replenishing the tricarboxylic acid cycle. Required for growth on ethanol or acetate, but dispensable when fermentable carbon sources are available. Also acts on 2-methylisocitrate.</text>
</comment>
<comment type="catalytic activity">
    <reaction evidence="1">
        <text>D-threo-isocitrate = glyoxylate + succinate</text>
        <dbReference type="Rhea" id="RHEA:13245"/>
        <dbReference type="ChEBI" id="CHEBI:15562"/>
        <dbReference type="ChEBI" id="CHEBI:30031"/>
        <dbReference type="ChEBI" id="CHEBI:36655"/>
        <dbReference type="EC" id="4.1.3.1"/>
    </reaction>
</comment>
<comment type="catalytic activity">
    <reaction evidence="1">
        <text>(2S,3R)-3-hydroxybutane-1,2,3-tricarboxylate = pyruvate + succinate</text>
        <dbReference type="Rhea" id="RHEA:16809"/>
        <dbReference type="ChEBI" id="CHEBI:15361"/>
        <dbReference type="ChEBI" id="CHEBI:30031"/>
        <dbReference type="ChEBI" id="CHEBI:57429"/>
        <dbReference type="EC" id="4.1.3.30"/>
    </reaction>
</comment>
<comment type="cofactor">
    <cofactor evidence="3">
        <name>Mg(2+)</name>
        <dbReference type="ChEBI" id="CHEBI:18420"/>
    </cofactor>
</comment>
<comment type="pathway">
    <text>Carbohydrate metabolism; glyoxylate cycle; (S)-malate from isocitrate: step 1/2.</text>
</comment>
<comment type="subunit">
    <text evidence="1">Homotetramer.</text>
</comment>
<comment type="subcellular location">
    <subcellularLocation>
        <location evidence="2">Glyoxysome</location>
    </subcellularLocation>
</comment>
<comment type="similarity">
    <text evidence="4">Belongs to the isocitrate lyase/PEP mutase superfamily. Isocitrate lyase family.</text>
</comment>
<feature type="chain" id="PRO_0000286157" description="Isocitrate lyase">
    <location>
        <begin position="1"/>
        <end position="546"/>
    </location>
</feature>
<feature type="active site" description="Proton acceptor" evidence="3">
    <location>
        <position position="215"/>
    </location>
</feature>
<feature type="binding site" evidence="3">
    <location>
        <begin position="106"/>
        <end position="108"/>
    </location>
    <ligand>
        <name>substrate</name>
    </ligand>
</feature>
<feature type="binding site" evidence="3">
    <location>
        <position position="177"/>
    </location>
    <ligand>
        <name>Mg(2+)</name>
        <dbReference type="ChEBI" id="CHEBI:18420"/>
    </ligand>
</feature>
<feature type="binding site" evidence="3">
    <location>
        <begin position="216"/>
        <end position="217"/>
    </location>
    <ligand>
        <name>substrate</name>
    </ligand>
</feature>
<feature type="binding site" evidence="3">
    <location>
        <position position="252"/>
    </location>
    <ligand>
        <name>substrate</name>
    </ligand>
</feature>
<feature type="binding site" evidence="3">
    <location>
        <begin position="432"/>
        <end position="436"/>
    </location>
    <ligand>
        <name>substrate</name>
    </ligand>
</feature>
<feature type="binding site" evidence="3">
    <location>
        <position position="466"/>
    </location>
    <ligand>
        <name>substrate</name>
    </ligand>
</feature>
<feature type="turn" evidence="5">
    <location>
        <begin position="13"/>
        <end position="16"/>
    </location>
</feature>
<feature type="helix" evidence="5">
    <location>
        <begin position="17"/>
        <end position="31"/>
    </location>
</feature>
<feature type="helix" evidence="5">
    <location>
        <begin position="34"/>
        <end position="36"/>
    </location>
</feature>
<feature type="helix" evidence="5">
    <location>
        <begin position="45"/>
        <end position="49"/>
    </location>
</feature>
<feature type="helix" evidence="5">
    <location>
        <begin position="60"/>
        <end position="77"/>
    </location>
</feature>
<feature type="strand" evidence="5">
    <location>
        <begin position="82"/>
        <end position="86"/>
    </location>
</feature>
<feature type="helix" evidence="5">
    <location>
        <begin position="90"/>
        <end position="96"/>
    </location>
</feature>
<feature type="turn" evidence="5">
    <location>
        <begin position="97"/>
        <end position="99"/>
    </location>
</feature>
<feature type="strand" evidence="5">
    <location>
        <begin position="103"/>
        <end position="105"/>
    </location>
</feature>
<feature type="helix" evidence="5">
    <location>
        <begin position="107"/>
        <end position="113"/>
    </location>
</feature>
<feature type="strand" evidence="5">
    <location>
        <begin position="122"/>
        <end position="125"/>
    </location>
</feature>
<feature type="helix" evidence="5">
    <location>
        <begin position="131"/>
        <end position="155"/>
    </location>
</feature>
<feature type="helix" evidence="5">
    <location>
        <begin position="159"/>
        <end position="161"/>
    </location>
</feature>
<feature type="strand" evidence="5">
    <location>
        <begin position="174"/>
        <end position="177"/>
    </location>
</feature>
<feature type="strand" evidence="5">
    <location>
        <begin position="182"/>
        <end position="184"/>
    </location>
</feature>
<feature type="helix" evidence="5">
    <location>
        <begin position="185"/>
        <end position="198"/>
    </location>
</feature>
<feature type="strand" evidence="5">
    <location>
        <begin position="201"/>
        <end position="208"/>
    </location>
</feature>
<feature type="turn" evidence="5">
    <location>
        <begin position="210"/>
        <end position="212"/>
    </location>
</feature>
<feature type="helix" evidence="5">
    <location>
        <begin position="226"/>
        <end position="243"/>
    </location>
</feature>
<feature type="strand" evidence="5">
    <location>
        <begin position="248"/>
        <end position="253"/>
    </location>
</feature>
<feature type="turn" evidence="5">
    <location>
        <begin position="255"/>
        <end position="257"/>
    </location>
</feature>
<feature type="strand" evidence="5">
    <location>
        <begin position="260"/>
        <end position="262"/>
    </location>
</feature>
<feature type="helix" evidence="5">
    <location>
        <begin position="267"/>
        <end position="270"/>
    </location>
</feature>
<feature type="helix" evidence="5">
    <location>
        <begin position="284"/>
        <end position="293"/>
    </location>
</feature>
<feature type="helix" evidence="5">
    <location>
        <begin position="298"/>
        <end position="311"/>
    </location>
</feature>
<feature type="helix" evidence="5">
    <location>
        <begin position="317"/>
        <end position="327"/>
    </location>
</feature>
<feature type="helix" evidence="5">
    <location>
        <begin position="333"/>
        <end position="344"/>
    </location>
</feature>
<feature type="helix" evidence="5">
    <location>
        <begin position="349"/>
        <end position="360"/>
    </location>
</feature>
<feature type="strand" evidence="5">
    <location>
        <begin position="367"/>
        <end position="369"/>
    </location>
</feature>
<feature type="strand" evidence="5">
    <location>
        <begin position="378"/>
        <end position="380"/>
    </location>
</feature>
<feature type="helix" evidence="5">
    <location>
        <begin position="384"/>
        <end position="394"/>
    </location>
</feature>
<feature type="helix" evidence="5">
    <location>
        <begin position="395"/>
        <end position="397"/>
    </location>
</feature>
<feature type="strand" evidence="5">
    <location>
        <begin position="399"/>
        <end position="403"/>
    </location>
</feature>
<feature type="helix" evidence="5">
    <location>
        <begin position="410"/>
        <end position="421"/>
    </location>
</feature>
<feature type="strand" evidence="5">
    <location>
        <begin position="429"/>
        <end position="432"/>
    </location>
</feature>
<feature type="helix" evidence="5">
    <location>
        <begin position="439"/>
        <end position="442"/>
    </location>
</feature>
<feature type="helix" evidence="5">
    <location>
        <begin position="445"/>
        <end position="448"/>
    </location>
</feature>
<feature type="helix" evidence="5">
    <location>
        <begin position="451"/>
        <end position="457"/>
    </location>
</feature>
<feature type="strand" evidence="5">
    <location>
        <begin position="460"/>
        <end position="465"/>
    </location>
</feature>
<feature type="helix" evidence="5">
    <location>
        <begin position="468"/>
        <end position="487"/>
    </location>
</feature>
<feature type="helix" evidence="5">
    <location>
        <begin position="489"/>
        <end position="495"/>
    </location>
</feature>
<feature type="helix" evidence="5">
    <location>
        <begin position="497"/>
        <end position="502"/>
    </location>
</feature>
<feature type="helix" evidence="5">
    <location>
        <begin position="506"/>
        <end position="508"/>
    </location>
</feature>
<feature type="helix" evidence="5">
    <location>
        <begin position="510"/>
        <end position="513"/>
    </location>
</feature>
<feature type="helix" evidence="5">
    <location>
        <begin position="516"/>
        <end position="525"/>
    </location>
</feature>
<feature type="helix" evidence="5">
    <location>
        <begin position="541"/>
        <end position="544"/>
    </location>
</feature>
<dbReference type="EC" id="4.1.3.1" evidence="1"/>
<dbReference type="EC" id="4.1.3.30" evidence="1"/>
<dbReference type="EMBL" id="DS231669">
    <property type="protein sequence ID" value="ESU16540.1"/>
    <property type="molecule type" value="Genomic_DNA"/>
</dbReference>
<dbReference type="EMBL" id="HG970332">
    <property type="protein sequence ID" value="CEF75197.1"/>
    <property type="molecule type" value="Genomic_DNA"/>
</dbReference>
<dbReference type="RefSeq" id="XP_011318802.1">
    <property type="nucleotide sequence ID" value="XM_011320500.1"/>
</dbReference>
<dbReference type="PDB" id="5E9H">
    <property type="method" value="X-ray"/>
    <property type="resolution" value="2.30 A"/>
    <property type="chains" value="A/B=1-546"/>
</dbReference>
<dbReference type="PDBsum" id="5E9H"/>
<dbReference type="SMR" id="Q4HYR2"/>
<dbReference type="FunCoup" id="Q4HYR2">
    <property type="interactions" value="176"/>
</dbReference>
<dbReference type="STRING" id="229533.Q4HYR2"/>
<dbReference type="GeneID" id="23556822"/>
<dbReference type="KEGG" id="fgr:FGSG_09896"/>
<dbReference type="VEuPathDB" id="FungiDB:FGRAMPH1_01G06785"/>
<dbReference type="eggNOG" id="KOG1260">
    <property type="taxonomic scope" value="Eukaryota"/>
</dbReference>
<dbReference type="HOGENOM" id="CLU_019214_2_2_1"/>
<dbReference type="InParanoid" id="Q4HYR2"/>
<dbReference type="OrthoDB" id="61545at110618"/>
<dbReference type="BRENDA" id="4.1.3.1">
    <property type="organism ID" value="2428"/>
</dbReference>
<dbReference type="UniPathway" id="UPA00703">
    <property type="reaction ID" value="UER00719"/>
</dbReference>
<dbReference type="Proteomes" id="UP000070720">
    <property type="component" value="Chromosome 1"/>
</dbReference>
<dbReference type="GO" id="GO:0009514">
    <property type="term" value="C:glyoxysome"/>
    <property type="evidence" value="ECO:0007669"/>
    <property type="project" value="UniProtKB-SubCell"/>
</dbReference>
<dbReference type="GO" id="GO:0004451">
    <property type="term" value="F:isocitrate lyase activity"/>
    <property type="evidence" value="ECO:0007669"/>
    <property type="project" value="UniProtKB-EC"/>
</dbReference>
<dbReference type="GO" id="GO:0046872">
    <property type="term" value="F:metal ion binding"/>
    <property type="evidence" value="ECO:0007669"/>
    <property type="project" value="UniProtKB-KW"/>
</dbReference>
<dbReference type="GO" id="GO:0046421">
    <property type="term" value="F:methylisocitrate lyase activity"/>
    <property type="evidence" value="ECO:0007669"/>
    <property type="project" value="UniProtKB-EC"/>
</dbReference>
<dbReference type="GO" id="GO:0006097">
    <property type="term" value="P:glyoxylate cycle"/>
    <property type="evidence" value="ECO:0007669"/>
    <property type="project" value="UniProtKB-UniPathway"/>
</dbReference>
<dbReference type="GO" id="GO:0006099">
    <property type="term" value="P:tricarboxylic acid cycle"/>
    <property type="evidence" value="ECO:0007669"/>
    <property type="project" value="UniProtKB-KW"/>
</dbReference>
<dbReference type="FunFam" id="1.10.10.850:FF:000001">
    <property type="entry name" value="Isocitrate lyase"/>
    <property type="match status" value="1"/>
</dbReference>
<dbReference type="Gene3D" id="1.10.10.850">
    <property type="match status" value="1"/>
</dbReference>
<dbReference type="Gene3D" id="3.20.20.60">
    <property type="entry name" value="Phosphoenolpyruvate-binding domains"/>
    <property type="match status" value="1"/>
</dbReference>
<dbReference type="InterPro" id="IPR006254">
    <property type="entry name" value="Isocitrate_lyase"/>
</dbReference>
<dbReference type="InterPro" id="IPR018523">
    <property type="entry name" value="Isocitrate_lyase_ph_CS"/>
</dbReference>
<dbReference type="InterPro" id="IPR015813">
    <property type="entry name" value="Pyrv/PenolPyrv_kinase-like_dom"/>
</dbReference>
<dbReference type="InterPro" id="IPR040442">
    <property type="entry name" value="Pyrv_kinase-like_dom_sf"/>
</dbReference>
<dbReference type="NCBIfam" id="TIGR01346">
    <property type="entry name" value="isocit_lyase"/>
    <property type="match status" value="1"/>
</dbReference>
<dbReference type="PANTHER" id="PTHR21631:SF3">
    <property type="entry name" value="BIFUNCTIONAL GLYOXYLATE CYCLE PROTEIN"/>
    <property type="match status" value="1"/>
</dbReference>
<dbReference type="PANTHER" id="PTHR21631">
    <property type="entry name" value="ISOCITRATE LYASE/MALATE SYNTHASE"/>
    <property type="match status" value="1"/>
</dbReference>
<dbReference type="Pfam" id="PF00463">
    <property type="entry name" value="ICL"/>
    <property type="match status" value="1"/>
</dbReference>
<dbReference type="PIRSF" id="PIRSF001362">
    <property type="entry name" value="Isocit_lyase"/>
    <property type="match status" value="1"/>
</dbReference>
<dbReference type="SUPFAM" id="SSF51621">
    <property type="entry name" value="Phosphoenolpyruvate/pyruvate domain"/>
    <property type="match status" value="1"/>
</dbReference>
<dbReference type="PROSITE" id="PS00161">
    <property type="entry name" value="ISOCITRATE_LYASE"/>
    <property type="match status" value="1"/>
</dbReference>